<protein>
    <recommendedName>
        <fullName evidence="1">Phenylalanine--tRNA ligase alpha subunit</fullName>
        <ecNumber evidence="1">6.1.1.20</ecNumber>
    </recommendedName>
    <alternativeName>
        <fullName evidence="1">Phenylalanyl-tRNA synthetase alpha subunit</fullName>
        <shortName evidence="1">PheRS</shortName>
    </alternativeName>
</protein>
<organism>
    <name type="scientific">Aeromonas hydrophila subsp. hydrophila (strain ATCC 7966 / DSM 30187 / BCRC 13018 / CCUG 14551 / JCM 1027 / KCTC 2358 / NCIMB 9240 / NCTC 8049)</name>
    <dbReference type="NCBI Taxonomy" id="380703"/>
    <lineage>
        <taxon>Bacteria</taxon>
        <taxon>Pseudomonadati</taxon>
        <taxon>Pseudomonadota</taxon>
        <taxon>Gammaproteobacteria</taxon>
        <taxon>Aeromonadales</taxon>
        <taxon>Aeromonadaceae</taxon>
        <taxon>Aeromonas</taxon>
    </lineage>
</organism>
<reference key="1">
    <citation type="journal article" date="2006" name="J. Bacteriol.">
        <title>Genome sequence of Aeromonas hydrophila ATCC 7966T: jack of all trades.</title>
        <authorList>
            <person name="Seshadri R."/>
            <person name="Joseph S.W."/>
            <person name="Chopra A.K."/>
            <person name="Sha J."/>
            <person name="Shaw J."/>
            <person name="Graf J."/>
            <person name="Haft D.H."/>
            <person name="Wu M."/>
            <person name="Ren Q."/>
            <person name="Rosovitz M.J."/>
            <person name="Madupu R."/>
            <person name="Tallon L."/>
            <person name="Kim M."/>
            <person name="Jin S."/>
            <person name="Vuong H."/>
            <person name="Stine O.C."/>
            <person name="Ali A."/>
            <person name="Horneman A.J."/>
            <person name="Heidelberg J.F."/>
        </authorList>
    </citation>
    <scope>NUCLEOTIDE SEQUENCE [LARGE SCALE GENOMIC DNA]</scope>
    <source>
        <strain>ATCC 7966 / DSM 30187 / BCRC 13018 / CCUG 14551 / JCM 1027 / KCTC 2358 / NCIMB 9240 / NCTC 8049</strain>
    </source>
</reference>
<dbReference type="EC" id="6.1.1.20" evidence="1"/>
<dbReference type="EMBL" id="CP000462">
    <property type="protein sequence ID" value="ABK37031.1"/>
    <property type="molecule type" value="Genomic_DNA"/>
</dbReference>
<dbReference type="RefSeq" id="WP_011706167.1">
    <property type="nucleotide sequence ID" value="NC_008570.1"/>
</dbReference>
<dbReference type="RefSeq" id="YP_856846.1">
    <property type="nucleotide sequence ID" value="NC_008570.1"/>
</dbReference>
<dbReference type="SMR" id="A0KKP5"/>
<dbReference type="STRING" id="380703.AHA_2323"/>
<dbReference type="EnsemblBacteria" id="ABK37031">
    <property type="protein sequence ID" value="ABK37031"/>
    <property type="gene ID" value="AHA_2323"/>
</dbReference>
<dbReference type="GeneID" id="69549726"/>
<dbReference type="KEGG" id="aha:AHA_2323"/>
<dbReference type="PATRIC" id="fig|380703.7.peg.2324"/>
<dbReference type="eggNOG" id="COG0016">
    <property type="taxonomic scope" value="Bacteria"/>
</dbReference>
<dbReference type="HOGENOM" id="CLU_025086_0_1_6"/>
<dbReference type="OrthoDB" id="9800719at2"/>
<dbReference type="Proteomes" id="UP000000756">
    <property type="component" value="Chromosome"/>
</dbReference>
<dbReference type="GO" id="GO:0005737">
    <property type="term" value="C:cytoplasm"/>
    <property type="evidence" value="ECO:0007669"/>
    <property type="project" value="UniProtKB-SubCell"/>
</dbReference>
<dbReference type="GO" id="GO:0005524">
    <property type="term" value="F:ATP binding"/>
    <property type="evidence" value="ECO:0007669"/>
    <property type="project" value="UniProtKB-UniRule"/>
</dbReference>
<dbReference type="GO" id="GO:0000287">
    <property type="term" value="F:magnesium ion binding"/>
    <property type="evidence" value="ECO:0007669"/>
    <property type="project" value="UniProtKB-UniRule"/>
</dbReference>
<dbReference type="GO" id="GO:0004826">
    <property type="term" value="F:phenylalanine-tRNA ligase activity"/>
    <property type="evidence" value="ECO:0007669"/>
    <property type="project" value="UniProtKB-UniRule"/>
</dbReference>
<dbReference type="GO" id="GO:0000049">
    <property type="term" value="F:tRNA binding"/>
    <property type="evidence" value="ECO:0007669"/>
    <property type="project" value="InterPro"/>
</dbReference>
<dbReference type="GO" id="GO:0006432">
    <property type="term" value="P:phenylalanyl-tRNA aminoacylation"/>
    <property type="evidence" value="ECO:0007669"/>
    <property type="project" value="UniProtKB-UniRule"/>
</dbReference>
<dbReference type="CDD" id="cd00496">
    <property type="entry name" value="PheRS_alpha_core"/>
    <property type="match status" value="1"/>
</dbReference>
<dbReference type="FunFam" id="3.30.930.10:FF:000003">
    <property type="entry name" value="Phenylalanine--tRNA ligase alpha subunit"/>
    <property type="match status" value="1"/>
</dbReference>
<dbReference type="Gene3D" id="3.30.930.10">
    <property type="entry name" value="Bira Bifunctional Protein, Domain 2"/>
    <property type="match status" value="1"/>
</dbReference>
<dbReference type="HAMAP" id="MF_00281">
    <property type="entry name" value="Phe_tRNA_synth_alpha1"/>
    <property type="match status" value="1"/>
</dbReference>
<dbReference type="InterPro" id="IPR006195">
    <property type="entry name" value="aa-tRNA-synth_II"/>
</dbReference>
<dbReference type="InterPro" id="IPR045864">
    <property type="entry name" value="aa-tRNA-synth_II/BPL/LPL"/>
</dbReference>
<dbReference type="InterPro" id="IPR004529">
    <property type="entry name" value="Phe-tRNA-synth_IIc_asu"/>
</dbReference>
<dbReference type="InterPro" id="IPR004188">
    <property type="entry name" value="Phe-tRNA_ligase_II_N"/>
</dbReference>
<dbReference type="InterPro" id="IPR022911">
    <property type="entry name" value="Phe_tRNA_ligase_alpha1_bac"/>
</dbReference>
<dbReference type="InterPro" id="IPR002319">
    <property type="entry name" value="Phenylalanyl-tRNA_Synthase"/>
</dbReference>
<dbReference type="InterPro" id="IPR010978">
    <property type="entry name" value="tRNA-bd_arm"/>
</dbReference>
<dbReference type="NCBIfam" id="TIGR00468">
    <property type="entry name" value="pheS"/>
    <property type="match status" value="1"/>
</dbReference>
<dbReference type="PANTHER" id="PTHR11538:SF41">
    <property type="entry name" value="PHENYLALANINE--TRNA LIGASE, MITOCHONDRIAL"/>
    <property type="match status" value="1"/>
</dbReference>
<dbReference type="PANTHER" id="PTHR11538">
    <property type="entry name" value="PHENYLALANYL-TRNA SYNTHETASE"/>
    <property type="match status" value="1"/>
</dbReference>
<dbReference type="Pfam" id="PF02912">
    <property type="entry name" value="Phe_tRNA-synt_N"/>
    <property type="match status" value="1"/>
</dbReference>
<dbReference type="Pfam" id="PF01409">
    <property type="entry name" value="tRNA-synt_2d"/>
    <property type="match status" value="1"/>
</dbReference>
<dbReference type="SUPFAM" id="SSF55681">
    <property type="entry name" value="Class II aaRS and biotin synthetases"/>
    <property type="match status" value="1"/>
</dbReference>
<dbReference type="SUPFAM" id="SSF46589">
    <property type="entry name" value="tRNA-binding arm"/>
    <property type="match status" value="1"/>
</dbReference>
<dbReference type="PROSITE" id="PS50862">
    <property type="entry name" value="AA_TRNA_LIGASE_II"/>
    <property type="match status" value="1"/>
</dbReference>
<evidence type="ECO:0000255" key="1">
    <source>
        <dbReference type="HAMAP-Rule" id="MF_00281"/>
    </source>
</evidence>
<name>SYFA_AERHH</name>
<keyword id="KW-0030">Aminoacyl-tRNA synthetase</keyword>
<keyword id="KW-0067">ATP-binding</keyword>
<keyword id="KW-0963">Cytoplasm</keyword>
<keyword id="KW-0436">Ligase</keyword>
<keyword id="KW-0460">Magnesium</keyword>
<keyword id="KW-0479">Metal-binding</keyword>
<keyword id="KW-0547">Nucleotide-binding</keyword>
<keyword id="KW-0648">Protein biosynthesis</keyword>
<keyword id="KW-1185">Reference proteome</keyword>
<sequence length="327" mass="37185">MQQLEEVVGQARAEIEGVSDIAALDEIRVKYLGKKGFFTEQMKGLGALSAEERPAAGAVINQAKQQVQDALNERREALEIAVLNQKLAAETIDVSLPGRRIENGGLHPVTRTIERIERLFGEMGFKVARGPEIEDGFHNFDALNIPAHHPARTDHDTFYFNPDLMLRTHTSGVQIRTMEHQQPPIRIIAPGRVYRNDYDMTHTPMFHQVEGLLVDEHASFTELKGILHDFLRNYFEEDLTIRFRPSYFPFTEPSAEVDVMGKNGKWLEVLGCGMVHPNVLRSVGIDPEKYSGFAFGMGVERLTMLRYGVNDLRAFFENDLRFLKQFK</sequence>
<gene>
    <name evidence="1" type="primary">pheS</name>
    <name type="ordered locus">AHA_2323</name>
</gene>
<proteinExistence type="inferred from homology"/>
<accession>A0KKP5</accession>
<feature type="chain" id="PRO_1000006794" description="Phenylalanine--tRNA ligase alpha subunit">
    <location>
        <begin position="1"/>
        <end position="327"/>
    </location>
</feature>
<feature type="binding site" evidence="1">
    <location>
        <position position="252"/>
    </location>
    <ligand>
        <name>Mg(2+)</name>
        <dbReference type="ChEBI" id="CHEBI:18420"/>
        <note>shared with beta subunit</note>
    </ligand>
</feature>
<comment type="catalytic activity">
    <reaction evidence="1">
        <text>tRNA(Phe) + L-phenylalanine + ATP = L-phenylalanyl-tRNA(Phe) + AMP + diphosphate + H(+)</text>
        <dbReference type="Rhea" id="RHEA:19413"/>
        <dbReference type="Rhea" id="RHEA-COMP:9668"/>
        <dbReference type="Rhea" id="RHEA-COMP:9699"/>
        <dbReference type="ChEBI" id="CHEBI:15378"/>
        <dbReference type="ChEBI" id="CHEBI:30616"/>
        <dbReference type="ChEBI" id="CHEBI:33019"/>
        <dbReference type="ChEBI" id="CHEBI:58095"/>
        <dbReference type="ChEBI" id="CHEBI:78442"/>
        <dbReference type="ChEBI" id="CHEBI:78531"/>
        <dbReference type="ChEBI" id="CHEBI:456215"/>
        <dbReference type="EC" id="6.1.1.20"/>
    </reaction>
</comment>
<comment type="cofactor">
    <cofactor evidence="1">
        <name>Mg(2+)</name>
        <dbReference type="ChEBI" id="CHEBI:18420"/>
    </cofactor>
    <text evidence="1">Binds 2 magnesium ions per tetramer.</text>
</comment>
<comment type="subunit">
    <text evidence="1">Tetramer of two alpha and two beta subunits.</text>
</comment>
<comment type="subcellular location">
    <subcellularLocation>
        <location evidence="1">Cytoplasm</location>
    </subcellularLocation>
</comment>
<comment type="similarity">
    <text evidence="1">Belongs to the class-II aminoacyl-tRNA synthetase family. Phe-tRNA synthetase alpha subunit type 1 subfamily.</text>
</comment>